<protein>
    <recommendedName>
        <fullName>Ovomucoid</fullName>
    </recommendedName>
</protein>
<accession>P52258</accession>
<reference key="1">
    <citation type="journal article" date="1990" name="J. Protein Chem.">
        <title>Amino acid sequences of ovomucoid third domain from 25 additional species of birds.</title>
        <authorList>
            <person name="Laskowski M. Jr."/>
            <person name="Apostol I."/>
            <person name="Ardelt W."/>
            <person name="Cook J."/>
            <person name="Giletto A."/>
            <person name="Kelly C.A."/>
            <person name="Lu W."/>
            <person name="Park S.J."/>
            <person name="Qasim M.A."/>
            <person name="Whatley H.E."/>
            <person name="Wieczorek A."/>
            <person name="Wynn R."/>
        </authorList>
    </citation>
    <scope>PROTEIN SEQUENCE</scope>
</reference>
<feature type="chain" id="PRO_0000073048" description="Ovomucoid">
    <location>
        <begin position="1" status="less than"/>
        <end position="56" status="greater than"/>
    </location>
</feature>
<feature type="domain" description="Kazal-like" evidence="1">
    <location>
        <begin position="6"/>
        <end position="56"/>
    </location>
</feature>
<feature type="site" description="Reactive bond 3">
    <location>
        <begin position="18"/>
        <end position="19"/>
    </location>
</feature>
<feature type="glycosylation site" description="N-linked (GlcNAc...) asparagine">
    <location>
        <position position="45"/>
    </location>
</feature>
<feature type="disulfide bond">
    <location>
        <begin position="8"/>
        <end position="38"/>
    </location>
</feature>
<feature type="disulfide bond">
    <location>
        <begin position="16"/>
        <end position="35"/>
    </location>
</feature>
<feature type="disulfide bond">
    <location>
        <begin position="24"/>
        <end position="56"/>
    </location>
</feature>
<feature type="non-terminal residue">
    <location>
        <position position="1"/>
    </location>
</feature>
<feature type="non-terminal residue">
    <location>
        <position position="56"/>
    </location>
</feature>
<dbReference type="PIR" id="B61494">
    <property type="entry name" value="B61494"/>
</dbReference>
<dbReference type="SMR" id="P52258"/>
<dbReference type="GO" id="GO:0005615">
    <property type="term" value="C:extracellular space"/>
    <property type="evidence" value="ECO:0007669"/>
    <property type="project" value="UniProtKB-ARBA"/>
</dbReference>
<dbReference type="GO" id="GO:0004867">
    <property type="term" value="F:serine-type endopeptidase inhibitor activity"/>
    <property type="evidence" value="ECO:0007669"/>
    <property type="project" value="UniProtKB-KW"/>
</dbReference>
<dbReference type="CDD" id="cd00104">
    <property type="entry name" value="KAZAL_FS"/>
    <property type="match status" value="1"/>
</dbReference>
<dbReference type="FunFam" id="3.30.60.30:FF:000037">
    <property type="entry name" value="Ovomucoid"/>
    <property type="match status" value="1"/>
</dbReference>
<dbReference type="Gene3D" id="3.30.60.30">
    <property type="match status" value="1"/>
</dbReference>
<dbReference type="InterPro" id="IPR051597">
    <property type="entry name" value="Bifunctional_prot_inhibitor"/>
</dbReference>
<dbReference type="InterPro" id="IPR002350">
    <property type="entry name" value="Kazal_dom"/>
</dbReference>
<dbReference type="InterPro" id="IPR036058">
    <property type="entry name" value="Kazal_dom_sf"/>
</dbReference>
<dbReference type="InterPro" id="IPR001239">
    <property type="entry name" value="Prot_inh_Kazal-m"/>
</dbReference>
<dbReference type="PANTHER" id="PTHR47729:SF1">
    <property type="entry name" value="OVOMUCOID-LIKE-RELATED"/>
    <property type="match status" value="1"/>
</dbReference>
<dbReference type="PANTHER" id="PTHR47729">
    <property type="entry name" value="SERINE PEPTIDASE INHIBITOR, KAZAL TYPE 2, TANDEM DUPLICATE 1-RELATED"/>
    <property type="match status" value="1"/>
</dbReference>
<dbReference type="Pfam" id="PF00050">
    <property type="entry name" value="Kazal_1"/>
    <property type="match status" value="1"/>
</dbReference>
<dbReference type="PRINTS" id="PR00290">
    <property type="entry name" value="KAZALINHBTR"/>
</dbReference>
<dbReference type="SMART" id="SM00280">
    <property type="entry name" value="KAZAL"/>
    <property type="match status" value="1"/>
</dbReference>
<dbReference type="SUPFAM" id="SSF100895">
    <property type="entry name" value="Kazal-type serine protease inhibitors"/>
    <property type="match status" value="1"/>
</dbReference>
<dbReference type="PROSITE" id="PS00282">
    <property type="entry name" value="KAZAL_1"/>
    <property type="match status" value="1"/>
</dbReference>
<dbReference type="PROSITE" id="PS51465">
    <property type="entry name" value="KAZAL_2"/>
    <property type="match status" value="1"/>
</dbReference>
<evidence type="ECO:0000255" key="1">
    <source>
        <dbReference type="PROSITE-ProRule" id="PRU00798"/>
    </source>
</evidence>
<sequence length="56" mass="6004">LAAVSVDCSEYPKPACTMEQRPLCGSDNKTYGNKCNFCNAVVESNGTLTLSHFGKC</sequence>
<comment type="subcellular location">
    <subcellularLocation>
        <location>Secreted</location>
    </subcellularLocation>
</comment>
<comment type="domain">
    <text>Avian ovomucoid consists of three homologous, tandem Kazal family inhibitory domains.</text>
</comment>
<organism>
    <name type="scientific">Afropavo congensis</name>
    <name type="common">Congo peafowl</name>
    <dbReference type="NCBI Taxonomy" id="9076"/>
    <lineage>
        <taxon>Eukaryota</taxon>
        <taxon>Metazoa</taxon>
        <taxon>Chordata</taxon>
        <taxon>Craniata</taxon>
        <taxon>Vertebrata</taxon>
        <taxon>Euteleostomi</taxon>
        <taxon>Archelosauria</taxon>
        <taxon>Archosauria</taxon>
        <taxon>Dinosauria</taxon>
        <taxon>Saurischia</taxon>
        <taxon>Theropoda</taxon>
        <taxon>Coelurosauria</taxon>
        <taxon>Aves</taxon>
        <taxon>Neognathae</taxon>
        <taxon>Galloanserae</taxon>
        <taxon>Galliformes</taxon>
        <taxon>Phasianidae</taxon>
        <taxon>Phasianinae</taxon>
        <taxon>Afropavo</taxon>
    </lineage>
</organism>
<keyword id="KW-0903">Direct protein sequencing</keyword>
<keyword id="KW-1015">Disulfide bond</keyword>
<keyword id="KW-0325">Glycoprotein</keyword>
<keyword id="KW-0646">Protease inhibitor</keyword>
<keyword id="KW-0677">Repeat</keyword>
<keyword id="KW-0964">Secreted</keyword>
<keyword id="KW-0722">Serine protease inhibitor</keyword>
<name>IOVO_AFRCO</name>
<proteinExistence type="evidence at protein level"/>